<comment type="function">
    <text>May be involved in cell wall organization and biogenesis.</text>
</comment>
<comment type="subcellular location">
    <subcellularLocation>
        <location evidence="2">Membrane</location>
        <topology evidence="2">Multi-pass membrane protein</topology>
    </subcellularLocation>
</comment>
<feature type="chain" id="PRO_0000239641" description="Protein ECM12">
    <location>
        <begin position="1"/>
        <end position="151"/>
    </location>
</feature>
<feature type="transmembrane region" description="Helical" evidence="1">
    <location>
        <begin position="17"/>
        <end position="37"/>
    </location>
</feature>
<feature type="transmembrane region" description="Helical" evidence="1">
    <location>
        <begin position="51"/>
        <end position="71"/>
    </location>
</feature>
<feature type="glycosylation site" description="N-linked (GlcNAc...) asparagine" evidence="1">
    <location>
        <position position="2"/>
    </location>
</feature>
<feature type="glycosylation site" description="N-linked (GlcNAc...) asparagine" evidence="1">
    <location>
        <position position="132"/>
    </location>
</feature>
<feature type="glycosylation site" description="N-linked (GlcNAc...) asparagine" evidence="1">
    <location>
        <position position="137"/>
    </location>
</feature>
<name>ECM12_YEAST</name>
<sequence length="151" mass="17435">MNRSFHFLIKYIYIHVLLVFYFHIKQQAIMPFFIFFFSSFDGLSFDLRVVAFLAKHVFVGVCSPFFVVGFFGSSRVVVTEWLSKLVLPPPPVSITQVFSLSRKRGEFSSGYILIINPYKSFLRSLLDFSIFNNTAKNKSSTFTLNLEDVSK</sequence>
<protein>
    <recommendedName>
        <fullName>Protein ECM12</fullName>
    </recommendedName>
    <alternativeName>
        <fullName>Extracellular mutant protein 12</fullName>
    </alternativeName>
</protein>
<accession>O13529</accession>
<accession>D3DKW7</accession>
<organism>
    <name type="scientific">Saccharomyces cerevisiae (strain ATCC 204508 / S288c)</name>
    <name type="common">Baker's yeast</name>
    <dbReference type="NCBI Taxonomy" id="559292"/>
    <lineage>
        <taxon>Eukaryota</taxon>
        <taxon>Fungi</taxon>
        <taxon>Dikarya</taxon>
        <taxon>Ascomycota</taxon>
        <taxon>Saccharomycotina</taxon>
        <taxon>Saccharomycetes</taxon>
        <taxon>Saccharomycetales</taxon>
        <taxon>Saccharomycetaceae</taxon>
        <taxon>Saccharomyces</taxon>
    </lineage>
</organism>
<dbReference type="EMBL" id="U10399">
    <property type="protein sequence ID" value="AAB68882.1"/>
    <property type="molecule type" value="Genomic_DNA"/>
</dbReference>
<dbReference type="EMBL" id="BK006934">
    <property type="protein sequence ID" value="DAA06711.1"/>
    <property type="molecule type" value="Genomic_DNA"/>
</dbReference>
<dbReference type="PIR" id="S52598">
    <property type="entry name" value="S52598"/>
</dbReference>
<dbReference type="RefSeq" id="NP_011886.1">
    <property type="nucleotide sequence ID" value="NM_001181428.1"/>
</dbReference>
<dbReference type="BioGRID" id="36452">
    <property type="interactions" value="13"/>
</dbReference>
<dbReference type="FunCoup" id="O13529">
    <property type="interactions" value="21"/>
</dbReference>
<dbReference type="STRING" id="4932.YHR021W-A"/>
<dbReference type="GlyCosmos" id="O13529">
    <property type="glycosylation" value="3 sites, No reported glycans"/>
</dbReference>
<dbReference type="GlyGen" id="O13529">
    <property type="glycosylation" value="3 sites"/>
</dbReference>
<dbReference type="PaxDb" id="4932-YHR021W-A"/>
<dbReference type="EnsemblFungi" id="YHR021W-A_mRNA">
    <property type="protein sequence ID" value="YHR021W-A"/>
    <property type="gene ID" value="YHR021W-A"/>
</dbReference>
<dbReference type="GeneID" id="856416"/>
<dbReference type="KEGG" id="sce:YHR021W-A"/>
<dbReference type="AGR" id="SGD:S000003531"/>
<dbReference type="SGD" id="S000003531">
    <property type="gene designation" value="ECM12"/>
</dbReference>
<dbReference type="VEuPathDB" id="FungiDB:YHR021W-A"/>
<dbReference type="HOGENOM" id="CLU_1732526_0_0_1"/>
<dbReference type="InParanoid" id="O13529"/>
<dbReference type="BioCyc" id="YEAST:G3O-31245-MONOMER"/>
<dbReference type="BioGRID-ORCS" id="856416">
    <property type="hits" value="0 hits in 10 CRISPR screens"/>
</dbReference>
<dbReference type="PRO" id="PR:O13529"/>
<dbReference type="Proteomes" id="UP000002311">
    <property type="component" value="Chromosome VIII"/>
</dbReference>
<dbReference type="RNAct" id="O13529">
    <property type="molecule type" value="protein"/>
</dbReference>
<dbReference type="GO" id="GO:0016020">
    <property type="term" value="C:membrane"/>
    <property type="evidence" value="ECO:0007669"/>
    <property type="project" value="UniProtKB-SubCell"/>
</dbReference>
<dbReference type="GO" id="GO:0071555">
    <property type="term" value="P:cell wall organization"/>
    <property type="evidence" value="ECO:0007669"/>
    <property type="project" value="UniProtKB-KW"/>
</dbReference>
<gene>
    <name type="primary">ECM12</name>
    <name type="ordered locus">YHR021W-A</name>
</gene>
<proteinExistence type="predicted"/>
<evidence type="ECO:0000255" key="1"/>
<evidence type="ECO:0000305" key="2"/>
<keyword id="KW-0961">Cell wall biogenesis/degradation</keyword>
<keyword id="KW-0325">Glycoprotein</keyword>
<keyword id="KW-0472">Membrane</keyword>
<keyword id="KW-1185">Reference proteome</keyword>
<keyword id="KW-0812">Transmembrane</keyword>
<keyword id="KW-1133">Transmembrane helix</keyword>
<reference key="1">
    <citation type="journal article" date="1994" name="Science">
        <title>Complete nucleotide sequence of Saccharomyces cerevisiae chromosome VIII.</title>
        <authorList>
            <person name="Johnston M."/>
            <person name="Andrews S."/>
            <person name="Brinkman R."/>
            <person name="Cooper J."/>
            <person name="Ding H."/>
            <person name="Dover J."/>
            <person name="Du Z."/>
            <person name="Favello A."/>
            <person name="Fulton L."/>
            <person name="Gattung S."/>
            <person name="Geisel C."/>
            <person name="Kirsten J."/>
            <person name="Kucaba T."/>
            <person name="Hillier L.W."/>
            <person name="Jier M."/>
            <person name="Johnston L."/>
            <person name="Langston Y."/>
            <person name="Latreille P."/>
            <person name="Louis E.J."/>
            <person name="Macri C."/>
            <person name="Mardis E."/>
            <person name="Menezes S."/>
            <person name="Mouser L."/>
            <person name="Nhan M."/>
            <person name="Rifkin L."/>
            <person name="Riles L."/>
            <person name="St Peter H."/>
            <person name="Trevaskis E."/>
            <person name="Vaughan K."/>
            <person name="Vignati D."/>
            <person name="Wilcox L."/>
            <person name="Wohldman P."/>
            <person name="Waterston R."/>
            <person name="Wilson R."/>
            <person name="Vaudin M."/>
        </authorList>
    </citation>
    <scope>NUCLEOTIDE SEQUENCE [LARGE SCALE GENOMIC DNA]</scope>
    <source>
        <strain>ATCC 204508 / S288c</strain>
    </source>
</reference>
<reference key="2">
    <citation type="journal article" date="2014" name="G3 (Bethesda)">
        <title>The reference genome sequence of Saccharomyces cerevisiae: Then and now.</title>
        <authorList>
            <person name="Engel S.R."/>
            <person name="Dietrich F.S."/>
            <person name="Fisk D.G."/>
            <person name="Binkley G."/>
            <person name="Balakrishnan R."/>
            <person name="Costanzo M.C."/>
            <person name="Dwight S.S."/>
            <person name="Hitz B.C."/>
            <person name="Karra K."/>
            <person name="Nash R.S."/>
            <person name="Weng S."/>
            <person name="Wong E.D."/>
            <person name="Lloyd P."/>
            <person name="Skrzypek M.S."/>
            <person name="Miyasato S.R."/>
            <person name="Simison M."/>
            <person name="Cherry J.M."/>
        </authorList>
    </citation>
    <scope>GENOME REANNOTATION</scope>
    <source>
        <strain>ATCC 204508 / S288c</strain>
    </source>
</reference>
<reference key="3">
    <citation type="journal article" date="1997" name="Genetics">
        <title>Large scale identification of genes involved in cell surface biosynthesis and architecture in Saccharomyces cerevisiae.</title>
        <authorList>
            <person name="Lussier M."/>
            <person name="White A.-M."/>
            <person name="Sheraton J."/>
            <person name="di Paolo T."/>
            <person name="Treadwell J."/>
            <person name="Southard S.B."/>
            <person name="Horenstein C.I."/>
            <person name="Chen-Weiner J."/>
            <person name="Ram A.F.J."/>
            <person name="Kapteyn J.C."/>
            <person name="Roemer T.W."/>
            <person name="Vo D.H."/>
            <person name="Bondoc D.C."/>
            <person name="Hall J."/>
            <person name="Zhong W.-W."/>
            <person name="Sdicu A.-M."/>
            <person name="Davies J."/>
            <person name="Klis F.M."/>
            <person name="Robbins P.W."/>
            <person name="Bussey H."/>
        </authorList>
    </citation>
    <scope>IDENTIFICATION</scope>
</reference>